<evidence type="ECO:0000255" key="1">
    <source>
        <dbReference type="HAMAP-Rule" id="MF_00040"/>
    </source>
</evidence>
<comment type="function">
    <text evidence="1">Responsible for the release of ribosomes from messenger RNA at the termination of protein biosynthesis. May increase the efficiency of translation by recycling ribosomes from one round of translation to another.</text>
</comment>
<comment type="subcellular location">
    <subcellularLocation>
        <location evidence="1">Cytoplasm</location>
    </subcellularLocation>
</comment>
<comment type="similarity">
    <text evidence="1">Belongs to the RRF family.</text>
</comment>
<reference key="1">
    <citation type="submission" date="2007-04" db="EMBL/GenBank/DDBJ databases">
        <title>Complete sequence of Shewanella putrefaciens CN-32.</title>
        <authorList>
            <consortium name="US DOE Joint Genome Institute"/>
            <person name="Copeland A."/>
            <person name="Lucas S."/>
            <person name="Lapidus A."/>
            <person name="Barry K."/>
            <person name="Detter J.C."/>
            <person name="Glavina del Rio T."/>
            <person name="Hammon N."/>
            <person name="Israni S."/>
            <person name="Dalin E."/>
            <person name="Tice H."/>
            <person name="Pitluck S."/>
            <person name="Chain P."/>
            <person name="Malfatti S."/>
            <person name="Shin M."/>
            <person name="Vergez L."/>
            <person name="Schmutz J."/>
            <person name="Larimer F."/>
            <person name="Land M."/>
            <person name="Hauser L."/>
            <person name="Kyrpides N."/>
            <person name="Mikhailova N."/>
            <person name="Romine M.F."/>
            <person name="Fredrickson J."/>
            <person name="Tiedje J."/>
            <person name="Richardson P."/>
        </authorList>
    </citation>
    <scope>NUCLEOTIDE SEQUENCE [LARGE SCALE GENOMIC DNA]</scope>
    <source>
        <strain>CN-32 / ATCC BAA-453</strain>
    </source>
</reference>
<sequence length="185" mass="20660">MIENIKKDAQERMGKCVDATKNQMAKVRTGRAHPSLLDSIQVSYYGTMTPLNQVANVGVEDSRTLSVTVFDRSAIQAVEKAIMSSDLGLNPMSAGATLRIPLPALTEERRKDFIKVVRAEAEGGRVAIRNVRRDAISEVKKLEKAKECTEDDVRRFEDDVQKFTDAHIKKVDEILAAKEIELMEV</sequence>
<organism>
    <name type="scientific">Shewanella putrefaciens (strain CN-32 / ATCC BAA-453)</name>
    <dbReference type="NCBI Taxonomy" id="319224"/>
    <lineage>
        <taxon>Bacteria</taxon>
        <taxon>Pseudomonadati</taxon>
        <taxon>Pseudomonadota</taxon>
        <taxon>Gammaproteobacteria</taxon>
        <taxon>Alteromonadales</taxon>
        <taxon>Shewanellaceae</taxon>
        <taxon>Shewanella</taxon>
    </lineage>
</organism>
<feature type="chain" id="PRO_1000003261" description="Ribosome-recycling factor">
    <location>
        <begin position="1"/>
        <end position="185"/>
    </location>
</feature>
<accession>A4Y546</accession>
<proteinExistence type="inferred from homology"/>
<gene>
    <name evidence="1" type="primary">frr</name>
    <name type="ordered locus">Sputcn32_1351</name>
</gene>
<dbReference type="EMBL" id="CP000681">
    <property type="protein sequence ID" value="ABP75079.1"/>
    <property type="molecule type" value="Genomic_DNA"/>
</dbReference>
<dbReference type="SMR" id="A4Y546"/>
<dbReference type="STRING" id="319224.Sputcn32_1351"/>
<dbReference type="KEGG" id="spc:Sputcn32_1351"/>
<dbReference type="eggNOG" id="COG0233">
    <property type="taxonomic scope" value="Bacteria"/>
</dbReference>
<dbReference type="HOGENOM" id="CLU_073981_2_1_6"/>
<dbReference type="GO" id="GO:0005829">
    <property type="term" value="C:cytosol"/>
    <property type="evidence" value="ECO:0007669"/>
    <property type="project" value="GOC"/>
</dbReference>
<dbReference type="GO" id="GO:0043023">
    <property type="term" value="F:ribosomal large subunit binding"/>
    <property type="evidence" value="ECO:0007669"/>
    <property type="project" value="TreeGrafter"/>
</dbReference>
<dbReference type="GO" id="GO:0002184">
    <property type="term" value="P:cytoplasmic translational termination"/>
    <property type="evidence" value="ECO:0007669"/>
    <property type="project" value="TreeGrafter"/>
</dbReference>
<dbReference type="CDD" id="cd00520">
    <property type="entry name" value="RRF"/>
    <property type="match status" value="1"/>
</dbReference>
<dbReference type="FunFam" id="1.10.132.20:FF:000001">
    <property type="entry name" value="Ribosome-recycling factor"/>
    <property type="match status" value="1"/>
</dbReference>
<dbReference type="FunFam" id="3.30.1360.40:FF:000001">
    <property type="entry name" value="Ribosome-recycling factor"/>
    <property type="match status" value="1"/>
</dbReference>
<dbReference type="Gene3D" id="3.30.1360.40">
    <property type="match status" value="1"/>
</dbReference>
<dbReference type="Gene3D" id="1.10.132.20">
    <property type="entry name" value="Ribosome-recycling factor"/>
    <property type="match status" value="1"/>
</dbReference>
<dbReference type="HAMAP" id="MF_00040">
    <property type="entry name" value="RRF"/>
    <property type="match status" value="1"/>
</dbReference>
<dbReference type="InterPro" id="IPR002661">
    <property type="entry name" value="Ribosome_recyc_fac"/>
</dbReference>
<dbReference type="InterPro" id="IPR023584">
    <property type="entry name" value="Ribosome_recyc_fac_dom"/>
</dbReference>
<dbReference type="InterPro" id="IPR036191">
    <property type="entry name" value="RRF_sf"/>
</dbReference>
<dbReference type="NCBIfam" id="TIGR00496">
    <property type="entry name" value="frr"/>
    <property type="match status" value="1"/>
</dbReference>
<dbReference type="PANTHER" id="PTHR20982:SF3">
    <property type="entry name" value="MITOCHONDRIAL RIBOSOME RECYCLING FACTOR PSEUDO 1"/>
    <property type="match status" value="1"/>
</dbReference>
<dbReference type="PANTHER" id="PTHR20982">
    <property type="entry name" value="RIBOSOME RECYCLING FACTOR"/>
    <property type="match status" value="1"/>
</dbReference>
<dbReference type="Pfam" id="PF01765">
    <property type="entry name" value="RRF"/>
    <property type="match status" value="1"/>
</dbReference>
<dbReference type="SUPFAM" id="SSF55194">
    <property type="entry name" value="Ribosome recycling factor, RRF"/>
    <property type="match status" value="1"/>
</dbReference>
<name>RRF_SHEPC</name>
<protein>
    <recommendedName>
        <fullName evidence="1">Ribosome-recycling factor</fullName>
        <shortName evidence="1">RRF</shortName>
    </recommendedName>
    <alternativeName>
        <fullName evidence="1">Ribosome-releasing factor</fullName>
    </alternativeName>
</protein>
<keyword id="KW-0963">Cytoplasm</keyword>
<keyword id="KW-0648">Protein biosynthesis</keyword>